<accession>A9VFL4</accession>
<evidence type="ECO:0000255" key="1">
    <source>
        <dbReference type="HAMAP-Rule" id="MF_00443"/>
    </source>
</evidence>
<feature type="chain" id="PRO_1000124604" description="Thiazole synthase">
    <location>
        <begin position="1"/>
        <end position="256"/>
    </location>
</feature>
<feature type="active site" description="Schiff-base intermediate with DXP" evidence="1">
    <location>
        <position position="96"/>
    </location>
</feature>
<feature type="binding site" evidence="1">
    <location>
        <position position="157"/>
    </location>
    <ligand>
        <name>1-deoxy-D-xylulose 5-phosphate</name>
        <dbReference type="ChEBI" id="CHEBI:57792"/>
    </ligand>
</feature>
<feature type="binding site" evidence="1">
    <location>
        <begin position="183"/>
        <end position="184"/>
    </location>
    <ligand>
        <name>1-deoxy-D-xylulose 5-phosphate</name>
        <dbReference type="ChEBI" id="CHEBI:57792"/>
    </ligand>
</feature>
<feature type="binding site" evidence="1">
    <location>
        <begin position="205"/>
        <end position="206"/>
    </location>
    <ligand>
        <name>1-deoxy-D-xylulose 5-phosphate</name>
        <dbReference type="ChEBI" id="CHEBI:57792"/>
    </ligand>
</feature>
<proteinExistence type="inferred from homology"/>
<sequence length="256" mass="27209">MLNIGQFSFHSRLLLGTGKFPDFDVQQKAIDVSEAEILTFAVRRMDIFDAKQPNLLEKLDVKKYTLLPNTAGAKNAEEAVRIAKLAKASGLCDMIKVEVIGDDRTLLPDPVETLKASEMLLEEGFIVLPYTSDDVVLARKLQELGVHAIMPGASPIGSGLGIVNPLNLSFIIEQATVPVIVDAGIGSPADAAFAMELGADGVLLNTAVSGANDPIKMAYAMKLGIEAGRLGFEAGRIARKRCATASSPLEGMSVVE</sequence>
<name>THIG_BACMK</name>
<dbReference type="EC" id="2.8.1.10" evidence="1"/>
<dbReference type="EMBL" id="CP000903">
    <property type="protein sequence ID" value="ABY41910.1"/>
    <property type="molecule type" value="Genomic_DNA"/>
</dbReference>
<dbReference type="RefSeq" id="WP_002186754.1">
    <property type="nucleotide sequence ID" value="NC_010184.1"/>
</dbReference>
<dbReference type="SMR" id="A9VFL4"/>
<dbReference type="GeneID" id="66264193"/>
<dbReference type="KEGG" id="bwe:BcerKBAB4_0648"/>
<dbReference type="eggNOG" id="COG2022">
    <property type="taxonomic scope" value="Bacteria"/>
</dbReference>
<dbReference type="HOGENOM" id="CLU_062233_1_0_9"/>
<dbReference type="UniPathway" id="UPA00060"/>
<dbReference type="Proteomes" id="UP000002154">
    <property type="component" value="Chromosome"/>
</dbReference>
<dbReference type="GO" id="GO:0005737">
    <property type="term" value="C:cytoplasm"/>
    <property type="evidence" value="ECO:0007669"/>
    <property type="project" value="UniProtKB-SubCell"/>
</dbReference>
<dbReference type="GO" id="GO:1990107">
    <property type="term" value="F:thiazole synthase activity"/>
    <property type="evidence" value="ECO:0007669"/>
    <property type="project" value="UniProtKB-EC"/>
</dbReference>
<dbReference type="GO" id="GO:0009229">
    <property type="term" value="P:thiamine diphosphate biosynthetic process"/>
    <property type="evidence" value="ECO:0007669"/>
    <property type="project" value="UniProtKB-UniRule"/>
</dbReference>
<dbReference type="CDD" id="cd04728">
    <property type="entry name" value="ThiG"/>
    <property type="match status" value="1"/>
</dbReference>
<dbReference type="FunFam" id="3.20.20.70:FF:000049">
    <property type="entry name" value="Thiazole synthase"/>
    <property type="match status" value="1"/>
</dbReference>
<dbReference type="Gene3D" id="3.20.20.70">
    <property type="entry name" value="Aldolase class I"/>
    <property type="match status" value="1"/>
</dbReference>
<dbReference type="HAMAP" id="MF_00443">
    <property type="entry name" value="ThiG"/>
    <property type="match status" value="1"/>
</dbReference>
<dbReference type="InterPro" id="IPR013785">
    <property type="entry name" value="Aldolase_TIM"/>
</dbReference>
<dbReference type="InterPro" id="IPR033983">
    <property type="entry name" value="Thiazole_synthase_ThiG"/>
</dbReference>
<dbReference type="InterPro" id="IPR008867">
    <property type="entry name" value="ThiG"/>
</dbReference>
<dbReference type="PANTHER" id="PTHR34266">
    <property type="entry name" value="THIAZOLE SYNTHASE"/>
    <property type="match status" value="1"/>
</dbReference>
<dbReference type="PANTHER" id="PTHR34266:SF2">
    <property type="entry name" value="THIAZOLE SYNTHASE"/>
    <property type="match status" value="1"/>
</dbReference>
<dbReference type="Pfam" id="PF05690">
    <property type="entry name" value="ThiG"/>
    <property type="match status" value="1"/>
</dbReference>
<dbReference type="SUPFAM" id="SSF110399">
    <property type="entry name" value="ThiG-like"/>
    <property type="match status" value="1"/>
</dbReference>
<comment type="function">
    <text evidence="1">Catalyzes the rearrangement of 1-deoxy-D-xylulose 5-phosphate (DXP) to produce the thiazole phosphate moiety of thiamine. Sulfur is provided by the thiocarboxylate moiety of the carrier protein ThiS. In vitro, sulfur can be provided by H(2)S.</text>
</comment>
<comment type="catalytic activity">
    <reaction evidence="1">
        <text>[ThiS sulfur-carrier protein]-C-terminal-Gly-aminoethanethioate + 2-iminoacetate + 1-deoxy-D-xylulose 5-phosphate = [ThiS sulfur-carrier protein]-C-terminal Gly-Gly + 2-[(2R,5Z)-2-carboxy-4-methylthiazol-5(2H)-ylidene]ethyl phosphate + 2 H2O + H(+)</text>
        <dbReference type="Rhea" id="RHEA:26297"/>
        <dbReference type="Rhea" id="RHEA-COMP:12909"/>
        <dbReference type="Rhea" id="RHEA-COMP:19908"/>
        <dbReference type="ChEBI" id="CHEBI:15377"/>
        <dbReference type="ChEBI" id="CHEBI:15378"/>
        <dbReference type="ChEBI" id="CHEBI:57792"/>
        <dbReference type="ChEBI" id="CHEBI:62899"/>
        <dbReference type="ChEBI" id="CHEBI:77846"/>
        <dbReference type="ChEBI" id="CHEBI:90778"/>
        <dbReference type="ChEBI" id="CHEBI:232372"/>
        <dbReference type="EC" id="2.8.1.10"/>
    </reaction>
</comment>
<comment type="pathway">
    <text evidence="1">Cofactor biosynthesis; thiamine diphosphate biosynthesis.</text>
</comment>
<comment type="subunit">
    <text evidence="1">Homotetramer. Forms heterodimers with either ThiH or ThiS.</text>
</comment>
<comment type="subcellular location">
    <subcellularLocation>
        <location evidence="1">Cytoplasm</location>
    </subcellularLocation>
</comment>
<comment type="similarity">
    <text evidence="1">Belongs to the ThiG family.</text>
</comment>
<gene>
    <name evidence="1" type="primary">thiG</name>
    <name type="ordered locus">BcerKBAB4_0648</name>
</gene>
<protein>
    <recommendedName>
        <fullName evidence="1">Thiazole synthase</fullName>
        <ecNumber evidence="1">2.8.1.10</ecNumber>
    </recommendedName>
</protein>
<organism>
    <name type="scientific">Bacillus mycoides (strain KBAB4)</name>
    <name type="common">Bacillus weihenstephanensis</name>
    <dbReference type="NCBI Taxonomy" id="315730"/>
    <lineage>
        <taxon>Bacteria</taxon>
        <taxon>Bacillati</taxon>
        <taxon>Bacillota</taxon>
        <taxon>Bacilli</taxon>
        <taxon>Bacillales</taxon>
        <taxon>Bacillaceae</taxon>
        <taxon>Bacillus</taxon>
        <taxon>Bacillus cereus group</taxon>
    </lineage>
</organism>
<keyword id="KW-0963">Cytoplasm</keyword>
<keyword id="KW-0704">Schiff base</keyword>
<keyword id="KW-0784">Thiamine biosynthesis</keyword>
<keyword id="KW-0808">Transferase</keyword>
<reference key="1">
    <citation type="journal article" date="2008" name="Chem. Biol. Interact.">
        <title>Extending the Bacillus cereus group genomics to putative food-borne pathogens of different toxicity.</title>
        <authorList>
            <person name="Lapidus A."/>
            <person name="Goltsman E."/>
            <person name="Auger S."/>
            <person name="Galleron N."/>
            <person name="Segurens B."/>
            <person name="Dossat C."/>
            <person name="Land M.L."/>
            <person name="Broussolle V."/>
            <person name="Brillard J."/>
            <person name="Guinebretiere M.-H."/>
            <person name="Sanchis V."/>
            <person name="Nguen-the C."/>
            <person name="Lereclus D."/>
            <person name="Richardson P."/>
            <person name="Wincker P."/>
            <person name="Weissenbach J."/>
            <person name="Ehrlich S.D."/>
            <person name="Sorokin A."/>
        </authorList>
    </citation>
    <scope>NUCLEOTIDE SEQUENCE [LARGE SCALE GENOMIC DNA]</scope>
    <source>
        <strain>KBAB4</strain>
    </source>
</reference>